<comment type="function">
    <text evidence="1">Catalyzes the reduction of glutathione disulfide (GSSG) to reduced glutathione (GSH). Constitutes the major mechanism to maintain a high GSH:GSSG ratio in the cytosol.</text>
</comment>
<comment type="catalytic activity">
    <reaction evidence="1">
        <text>2 glutathione + NADP(+) = glutathione disulfide + NADPH + H(+)</text>
        <dbReference type="Rhea" id="RHEA:11740"/>
        <dbReference type="ChEBI" id="CHEBI:15378"/>
        <dbReference type="ChEBI" id="CHEBI:57783"/>
        <dbReference type="ChEBI" id="CHEBI:57925"/>
        <dbReference type="ChEBI" id="CHEBI:58297"/>
        <dbReference type="ChEBI" id="CHEBI:58349"/>
        <dbReference type="EC" id="1.8.1.7"/>
    </reaction>
</comment>
<comment type="cofactor">
    <cofactor evidence="1">
        <name>FAD</name>
        <dbReference type="ChEBI" id="CHEBI:57692"/>
    </cofactor>
    <text evidence="1">Binds 1 FAD per subunit.</text>
</comment>
<comment type="subunit">
    <text evidence="1">Homodimer.</text>
</comment>
<comment type="subcellular location">
    <subcellularLocation>
        <location evidence="1">Cytoplasm</location>
    </subcellularLocation>
</comment>
<comment type="miscellaneous">
    <text evidence="1">The active site is a redox-active disulfide bond.</text>
</comment>
<comment type="similarity">
    <text evidence="3">Belongs to the class-I pyridine nucleotide-disulfide oxidoreductase family.</text>
</comment>
<protein>
    <recommendedName>
        <fullName>Glutathione reductase</fullName>
        <shortName>GR</shortName>
        <shortName>GRase</shortName>
        <ecNumber>1.8.1.7</ecNumber>
    </recommendedName>
</protein>
<sequence>VAIAENSVVGGTCVIRGCVPKLTLTGDDTEPLIVDALLCATGRTTQSNIFAVGDCTDR</sequence>
<dbReference type="EC" id="1.8.1.7"/>
<dbReference type="PIR" id="PX0017">
    <property type="entry name" value="PX0017"/>
</dbReference>
<dbReference type="GO" id="GO:0005737">
    <property type="term" value="C:cytoplasm"/>
    <property type="evidence" value="ECO:0007669"/>
    <property type="project" value="UniProtKB-SubCell"/>
</dbReference>
<dbReference type="GO" id="GO:0004362">
    <property type="term" value="F:glutathione-disulfide reductase (NADPH) activity"/>
    <property type="evidence" value="ECO:0007669"/>
    <property type="project" value="UniProtKB-EC"/>
</dbReference>
<dbReference type="InterPro" id="IPR012999">
    <property type="entry name" value="Pyr_OxRdtase_I_AS"/>
</dbReference>
<dbReference type="PROSITE" id="PS00076">
    <property type="entry name" value="PYRIDINE_REDOX_1"/>
    <property type="match status" value="1"/>
</dbReference>
<feature type="chain" id="PRO_0000067978" description="Glutathione reductase">
    <location>
        <begin position="1" status="less than"/>
        <end position="58" status="greater than"/>
    </location>
</feature>
<feature type="binding site" evidence="1">
    <location>
        <position position="5"/>
    </location>
    <ligand>
        <name>FAD</name>
        <dbReference type="ChEBI" id="CHEBI:57692"/>
    </ligand>
</feature>
<feature type="binding site" evidence="1">
    <location>
        <position position="12"/>
    </location>
    <ligand>
        <name>FAD</name>
        <dbReference type="ChEBI" id="CHEBI:57692"/>
    </ligand>
</feature>
<feature type="binding site" evidence="1">
    <location>
        <position position="13"/>
    </location>
    <ligand>
        <name>FAD</name>
        <dbReference type="ChEBI" id="CHEBI:57692"/>
    </ligand>
</feature>
<feature type="binding site" evidence="1">
    <location>
        <position position="21"/>
    </location>
    <ligand>
        <name>FAD</name>
        <dbReference type="ChEBI" id="CHEBI:57692"/>
    </ligand>
</feature>
<feature type="disulfide bond" description="Redox-active" evidence="2">
    <location>
        <begin position="13"/>
        <end position="18"/>
    </location>
</feature>
<feature type="non-consecutive residues" evidence="3">
    <location>
        <begin position="21"/>
        <end position="22"/>
    </location>
</feature>
<feature type="non-consecutive residues" evidence="3">
    <location>
        <begin position="43"/>
        <end position="44"/>
    </location>
</feature>
<feature type="non-terminal residue">
    <location>
        <position position="1"/>
    </location>
</feature>
<feature type="non-terminal residue">
    <location>
        <position position="58"/>
    </location>
</feature>
<organism>
    <name type="scientific">Spirulina sp</name>
    <dbReference type="NCBI Taxonomy" id="1157"/>
    <lineage>
        <taxon>Bacteria</taxon>
        <taxon>Bacillati</taxon>
        <taxon>Cyanobacteriota</taxon>
        <taxon>Cyanophyceae</taxon>
        <taxon>Spirulinales</taxon>
        <taxon>Spirulinaceae</taxon>
        <taxon>Spirulina</taxon>
    </lineage>
</organism>
<evidence type="ECO:0000250" key="1">
    <source>
        <dbReference type="UniProtKB" id="P06715"/>
    </source>
</evidence>
<evidence type="ECO:0000269" key="2">
    <source>
    </source>
</evidence>
<evidence type="ECO:0000305" key="3"/>
<proteinExistence type="evidence at protein level"/>
<accession>P11804</accession>
<name>GSHR_SPISP</name>
<keyword id="KW-0963">Cytoplasm</keyword>
<keyword id="KW-0903">Direct protein sequencing</keyword>
<keyword id="KW-1015">Disulfide bond</keyword>
<keyword id="KW-0274">FAD</keyword>
<keyword id="KW-0285">Flavoprotein</keyword>
<keyword id="KW-0521">NADP</keyword>
<keyword id="KW-0560">Oxidoreductase</keyword>
<keyword id="KW-0676">Redox-active center</keyword>
<reference key="1">
    <citation type="journal article" date="1989" name="J. Biochem.">
        <title>Isolation and sequence studies of cysteinyl peptides from Spirulina glutathione reductase: comparison of active site cysteine peptides with those of other flavoprotein disulfide oxidoreductases.</title>
        <authorList>
            <person name="Cui J.-Y."/>
            <person name="Wakabayashi S."/>
            <person name="Wada K."/>
            <person name="Fukuyama K."/>
            <person name="Matsubara H."/>
        </authorList>
    </citation>
    <scope>PROTEIN SEQUENCE</scope>
    <scope>DISULFIDE BOND</scope>
</reference>